<comment type="function">
    <text evidence="2 3">Part of the RFC clamp loader complex which loads the PCNA sliding clamp onto DNA. The complex possesses DNA-dependent ATPase activity which is further stimulated by PCNA. In conjunction with PCNA stimulates DNA synthesis by PolB, relieving inhibition by replication protein A (RPA).</text>
</comment>
<comment type="subunit">
    <text evidence="3">Heterohexamer composed of four small subunits (RfcS) and two large subunits (RfcL).</text>
</comment>
<comment type="similarity">
    <text evidence="4">Belongs to the activator 1 small subunits family. RfcS subfamily.</text>
</comment>
<dbReference type="EMBL" id="AE000666">
    <property type="protein sequence ID" value="AAB84747.1"/>
    <property type="molecule type" value="Genomic_DNA"/>
</dbReference>
<dbReference type="PIR" id="B69130">
    <property type="entry name" value="B69130"/>
</dbReference>
<dbReference type="SMR" id="O26343"/>
<dbReference type="STRING" id="187420.MTH_241"/>
<dbReference type="PaxDb" id="187420-MTH_241"/>
<dbReference type="EnsemblBacteria" id="AAB84747">
    <property type="protein sequence ID" value="AAB84747"/>
    <property type="gene ID" value="MTH_241"/>
</dbReference>
<dbReference type="KEGG" id="mth:MTH_241"/>
<dbReference type="PATRIC" id="fig|187420.15.peg.210"/>
<dbReference type="HOGENOM" id="CLU_042324_2_1_2"/>
<dbReference type="InParanoid" id="O26343"/>
<dbReference type="Proteomes" id="UP000005223">
    <property type="component" value="Chromosome"/>
</dbReference>
<dbReference type="GO" id="GO:0005663">
    <property type="term" value="C:DNA replication factor C complex"/>
    <property type="evidence" value="ECO:0007669"/>
    <property type="project" value="InterPro"/>
</dbReference>
<dbReference type="GO" id="GO:0005524">
    <property type="term" value="F:ATP binding"/>
    <property type="evidence" value="ECO:0007669"/>
    <property type="project" value="UniProtKB-UniRule"/>
</dbReference>
<dbReference type="GO" id="GO:0016887">
    <property type="term" value="F:ATP hydrolysis activity"/>
    <property type="evidence" value="ECO:0007669"/>
    <property type="project" value="InterPro"/>
</dbReference>
<dbReference type="GO" id="GO:0003677">
    <property type="term" value="F:DNA binding"/>
    <property type="evidence" value="ECO:0007669"/>
    <property type="project" value="InterPro"/>
</dbReference>
<dbReference type="GO" id="GO:0003689">
    <property type="term" value="F:DNA clamp loader activity"/>
    <property type="evidence" value="ECO:0007669"/>
    <property type="project" value="UniProtKB-UniRule"/>
</dbReference>
<dbReference type="GO" id="GO:0006281">
    <property type="term" value="P:DNA repair"/>
    <property type="evidence" value="ECO:0007669"/>
    <property type="project" value="TreeGrafter"/>
</dbReference>
<dbReference type="GO" id="GO:0006261">
    <property type="term" value="P:DNA-templated DNA replication"/>
    <property type="evidence" value="ECO:0007669"/>
    <property type="project" value="TreeGrafter"/>
</dbReference>
<dbReference type="CDD" id="cd00009">
    <property type="entry name" value="AAA"/>
    <property type="match status" value="1"/>
</dbReference>
<dbReference type="CDD" id="cd18140">
    <property type="entry name" value="HLD_clamp_RFC"/>
    <property type="match status" value="1"/>
</dbReference>
<dbReference type="FunFam" id="1.20.272.10:FF:000029">
    <property type="entry name" value="Replication factor C small subunit"/>
    <property type="match status" value="1"/>
</dbReference>
<dbReference type="FunFam" id="3.40.50.300:FF:000952">
    <property type="entry name" value="Replication factor C subunit 2"/>
    <property type="match status" value="1"/>
</dbReference>
<dbReference type="Gene3D" id="1.10.8.60">
    <property type="match status" value="1"/>
</dbReference>
<dbReference type="Gene3D" id="1.20.272.10">
    <property type="match status" value="1"/>
</dbReference>
<dbReference type="Gene3D" id="3.40.50.300">
    <property type="entry name" value="P-loop containing nucleotide triphosphate hydrolases"/>
    <property type="match status" value="1"/>
</dbReference>
<dbReference type="HAMAP" id="MF_01509">
    <property type="entry name" value="RfcS"/>
    <property type="match status" value="1"/>
</dbReference>
<dbReference type="InterPro" id="IPR003593">
    <property type="entry name" value="AAA+_ATPase"/>
</dbReference>
<dbReference type="InterPro" id="IPR003959">
    <property type="entry name" value="ATPase_AAA_core"/>
</dbReference>
<dbReference type="InterPro" id="IPR008921">
    <property type="entry name" value="DNA_pol3_clamp-load_cplx_C"/>
</dbReference>
<dbReference type="InterPro" id="IPR050238">
    <property type="entry name" value="DNA_Rep/Repair_Clamp_Loader"/>
</dbReference>
<dbReference type="InterPro" id="IPR027417">
    <property type="entry name" value="P-loop_NTPase"/>
</dbReference>
<dbReference type="InterPro" id="IPR023748">
    <property type="entry name" value="Rep_factor-C_ssu_arc"/>
</dbReference>
<dbReference type="InterPro" id="IPR013748">
    <property type="entry name" value="Rep_factorC_C"/>
</dbReference>
<dbReference type="InterPro" id="IPR047854">
    <property type="entry name" value="RFC_lid"/>
</dbReference>
<dbReference type="NCBIfam" id="NF001679">
    <property type="entry name" value="PRK00440.1"/>
    <property type="match status" value="1"/>
</dbReference>
<dbReference type="PANTHER" id="PTHR11669">
    <property type="entry name" value="REPLICATION FACTOR C / DNA POLYMERASE III GAMMA-TAU SUBUNIT"/>
    <property type="match status" value="1"/>
</dbReference>
<dbReference type="PANTHER" id="PTHR11669:SF20">
    <property type="entry name" value="REPLICATION FACTOR C SUBUNIT 4"/>
    <property type="match status" value="1"/>
</dbReference>
<dbReference type="Pfam" id="PF00004">
    <property type="entry name" value="AAA"/>
    <property type="match status" value="1"/>
</dbReference>
<dbReference type="Pfam" id="PF21960">
    <property type="entry name" value="RCF1-5-like_lid"/>
    <property type="match status" value="1"/>
</dbReference>
<dbReference type="Pfam" id="PF08542">
    <property type="entry name" value="Rep_fac_C"/>
    <property type="match status" value="1"/>
</dbReference>
<dbReference type="SMART" id="SM00382">
    <property type="entry name" value="AAA"/>
    <property type="match status" value="1"/>
</dbReference>
<dbReference type="SUPFAM" id="SSF52540">
    <property type="entry name" value="P-loop containing nucleoside triphosphate hydrolases"/>
    <property type="match status" value="1"/>
</dbReference>
<dbReference type="SUPFAM" id="SSF48019">
    <property type="entry name" value="post-AAA+ oligomerization domain-like"/>
    <property type="match status" value="1"/>
</dbReference>
<sequence>MIIMNGPWVEKYRPQKLDDIVGQEHIIPRLKRYVEEKSMPNLMFTGPAGVGKTTAALALAREILGEYWRQNFLELNASDARGIDTVRTSIKNFCRLKPVGAPFRIIFLDEVDNMTKDAQHALRREMEMYTKTSSFILSCNYSSKIIDPIQSRCAIFRFLPLKGHQIIKRLEYIAEKENLEYEAHALETIVYFAEGDLRKAINLLQSAASLGEKITESSIYDVVSRARPKDVRKMIKTILDGKFMEARDMLREIMVLQGISGEDMVTQIYQELSRLAMEGEVDGDRYVGLIDAIGEYDFRIREGANPRIQLEALLARFLEHA</sequence>
<protein>
    <recommendedName>
        <fullName>Replication factor C small subunit</fullName>
        <shortName>RFC small subunit</shortName>
    </recommendedName>
    <alternativeName>
        <fullName>Clamp loader small subunit</fullName>
    </alternativeName>
    <alternativeName>
        <fullName>MthRFC small subunit</fullName>
    </alternativeName>
</protein>
<organism>
    <name type="scientific">Methanothermobacter thermautotrophicus (strain ATCC 29096 / DSM 1053 / JCM 10044 / NBRC 100330 / Delta H)</name>
    <name type="common">Methanobacterium thermoautotrophicum</name>
    <dbReference type="NCBI Taxonomy" id="187420"/>
    <lineage>
        <taxon>Archaea</taxon>
        <taxon>Methanobacteriati</taxon>
        <taxon>Methanobacteriota</taxon>
        <taxon>Methanomada group</taxon>
        <taxon>Methanobacteria</taxon>
        <taxon>Methanobacteriales</taxon>
        <taxon>Methanobacteriaceae</taxon>
        <taxon>Methanothermobacter</taxon>
    </lineage>
</organism>
<accession>O26343</accession>
<keyword id="KW-0067">ATP-binding</keyword>
<keyword id="KW-0235">DNA replication</keyword>
<keyword id="KW-0547">Nucleotide-binding</keyword>
<keyword id="KW-1185">Reference proteome</keyword>
<proteinExistence type="evidence at protein level"/>
<evidence type="ECO:0000255" key="1"/>
<evidence type="ECO:0000269" key="2">
    <source>
    </source>
</evidence>
<evidence type="ECO:0000269" key="3">
    <source>
    </source>
</evidence>
<evidence type="ECO:0000305" key="4"/>
<reference key="1">
    <citation type="journal article" date="1997" name="J. Bacteriol.">
        <title>Complete genome sequence of Methanobacterium thermoautotrophicum deltaH: functional analysis and comparative genomics.</title>
        <authorList>
            <person name="Smith D.R."/>
            <person name="Doucette-Stamm L.A."/>
            <person name="Deloughery C."/>
            <person name="Lee H.-M."/>
            <person name="Dubois J."/>
            <person name="Aldredge T."/>
            <person name="Bashirzadeh R."/>
            <person name="Blakely D."/>
            <person name="Cook R."/>
            <person name="Gilbert K."/>
            <person name="Harrison D."/>
            <person name="Hoang L."/>
            <person name="Keagle P."/>
            <person name="Lumm W."/>
            <person name="Pothier B."/>
            <person name="Qiu D."/>
            <person name="Spadafora R."/>
            <person name="Vicare R."/>
            <person name="Wang Y."/>
            <person name="Wierzbowski J."/>
            <person name="Gibson R."/>
            <person name="Jiwani N."/>
            <person name="Caruso A."/>
            <person name="Bush D."/>
            <person name="Safer H."/>
            <person name="Patwell D."/>
            <person name="Prabhakar S."/>
            <person name="McDougall S."/>
            <person name="Shimer G."/>
            <person name="Goyal A."/>
            <person name="Pietrovski S."/>
            <person name="Church G.M."/>
            <person name="Daniels C.J."/>
            <person name="Mao J.-I."/>
            <person name="Rice P."/>
            <person name="Noelling J."/>
            <person name="Reeve J.N."/>
        </authorList>
    </citation>
    <scope>NUCLEOTIDE SEQUENCE [LARGE SCALE GENOMIC DNA]</scope>
    <source>
        <strain>ATCC 29096 / DSM 1053 / JCM 10044 / NBRC 100330 / Delta H</strain>
    </source>
</reference>
<reference key="2">
    <citation type="journal article" date="1999" name="J. Biol. Chem.">
        <title>Isolation and characterization of a split B-type DNA polymerase from the archaeon Methanobacterium thermoautotrophicum deltaH.</title>
        <authorList>
            <person name="Kelman Z."/>
            <person name="Pietrokovski S."/>
            <person name="Hurwitz J."/>
        </authorList>
    </citation>
    <scope>FUNCTION</scope>
    <source>
        <strain>ATCC 29096 / DSM 1053 / JCM 10044 / NBRC 100330 / Delta H</strain>
    </source>
</reference>
<reference key="3">
    <citation type="journal article" date="2000" name="J. Biol. Chem.">
        <title>A unique organization of the protein subunits of the DNA polymerase clamp loader in the archaeon Methanobacterium thermoautotrophicum deltaH.</title>
        <authorList>
            <person name="Kelman Z."/>
            <person name="Hurwitz J."/>
        </authorList>
    </citation>
    <scope>FUNCTION</scope>
    <scope>SUBUNIT</scope>
    <source>
        <strain>ATCC 29096 / DSM 1053 / JCM 10044 / NBRC 100330 / Delta H</strain>
    </source>
</reference>
<feature type="chain" id="PRO_0000135977" description="Replication factor C small subunit">
    <location>
        <begin position="1"/>
        <end position="321"/>
    </location>
</feature>
<feature type="binding site" evidence="1">
    <location>
        <begin position="46"/>
        <end position="53"/>
    </location>
    <ligand>
        <name>ATP</name>
        <dbReference type="ChEBI" id="CHEBI:30616"/>
    </ligand>
</feature>
<gene>
    <name type="primary">rfcS</name>
    <name type="ordered locus">MTH_241</name>
</gene>
<name>RFCS_METTH</name>